<accession>P95937</accession>
<sequence>MCIFCNIVEGRDHGYIVYSNDRVVAFLDKFPITPGHTLVVPRTHYENFLEISEDVIPYLCTAVRKISIAVKKALKADGIRILTNIGKSAGQVVFHSHFHIVPTWSQDPDIMKDFVPRKEQSREYYEYVQKAIIETLKNI</sequence>
<name>YHIT_SACS2</name>
<protein>
    <recommendedName>
        <fullName>Uncharacterized HIT-like protein SSO2163</fullName>
    </recommendedName>
</protein>
<gene>
    <name type="ordered locus">SSO2163</name>
    <name type="ORF">C01_039</name>
</gene>
<evidence type="ECO:0000255" key="1">
    <source>
        <dbReference type="PROSITE-ProRule" id="PRU00464"/>
    </source>
</evidence>
<keyword id="KW-1185">Reference proteome</keyword>
<reference key="1">
    <citation type="journal article" date="1996" name="Mol. Microbiol.">
        <title>Organizational characteristics and information content of an archaeal genome: 156 kb of sequence from Sulfolobus solfataricus P2.</title>
        <authorList>
            <person name="Sensen C.W."/>
            <person name="Klenk H.-P."/>
            <person name="Singh R.K."/>
            <person name="Allard G."/>
            <person name="Chan C.C.-Y."/>
            <person name="Liu Q.Y."/>
            <person name="Penny S.L."/>
            <person name="Young F."/>
            <person name="Schenk M.E."/>
            <person name="Gaasterland T."/>
            <person name="Doolittle W.F."/>
            <person name="Ragan M.A."/>
            <person name="Charlebois R.L."/>
        </authorList>
    </citation>
    <scope>NUCLEOTIDE SEQUENCE [GENOMIC DNA]</scope>
    <source>
        <strain>ATCC 35092 / DSM 1617 / JCM 11322 / P2</strain>
    </source>
</reference>
<reference key="2">
    <citation type="journal article" date="2001" name="Proc. Natl. Acad. Sci. U.S.A.">
        <title>The complete genome of the crenarchaeon Sulfolobus solfataricus P2.</title>
        <authorList>
            <person name="She Q."/>
            <person name="Singh R.K."/>
            <person name="Confalonieri F."/>
            <person name="Zivanovic Y."/>
            <person name="Allard G."/>
            <person name="Awayez M.J."/>
            <person name="Chan-Weiher C.C.-Y."/>
            <person name="Clausen I.G."/>
            <person name="Curtis B.A."/>
            <person name="De Moors A."/>
            <person name="Erauso G."/>
            <person name="Fletcher C."/>
            <person name="Gordon P.M.K."/>
            <person name="Heikamp-de Jong I."/>
            <person name="Jeffries A.C."/>
            <person name="Kozera C.J."/>
            <person name="Medina N."/>
            <person name="Peng X."/>
            <person name="Thi-Ngoc H.P."/>
            <person name="Redder P."/>
            <person name="Schenk M.E."/>
            <person name="Theriault C."/>
            <person name="Tolstrup N."/>
            <person name="Charlebois R.L."/>
            <person name="Doolittle W.F."/>
            <person name="Duguet M."/>
            <person name="Gaasterland T."/>
            <person name="Garrett R.A."/>
            <person name="Ragan M.A."/>
            <person name="Sensen C.W."/>
            <person name="Van der Oost J."/>
        </authorList>
    </citation>
    <scope>NUCLEOTIDE SEQUENCE [LARGE SCALE GENOMIC DNA]</scope>
    <source>
        <strain>ATCC 35092 / DSM 1617 / JCM 11322 / P2</strain>
    </source>
</reference>
<feature type="chain" id="PRO_0000109835" description="Uncharacterized HIT-like protein SSO2163">
    <location>
        <begin position="1"/>
        <end position="139"/>
    </location>
</feature>
<feature type="domain" description="HIT" evidence="1">
    <location>
        <begin position="3"/>
        <end position="110"/>
    </location>
</feature>
<feature type="short sequence motif" description="Histidine triad motif">
    <location>
        <begin position="95"/>
        <end position="99"/>
    </location>
</feature>
<dbReference type="EMBL" id="Y08256">
    <property type="protein sequence ID" value="CAA69441.1"/>
    <property type="molecule type" value="Genomic_DNA"/>
</dbReference>
<dbReference type="EMBL" id="AE006641">
    <property type="protein sequence ID" value="AAK42339.1"/>
    <property type="molecule type" value="Genomic_DNA"/>
</dbReference>
<dbReference type="PIR" id="S74070">
    <property type="entry name" value="S74070"/>
</dbReference>
<dbReference type="RefSeq" id="WP_009992148.1">
    <property type="nucleotide sequence ID" value="NC_002754.1"/>
</dbReference>
<dbReference type="SMR" id="P95937"/>
<dbReference type="FunCoup" id="P95937">
    <property type="interactions" value="184"/>
</dbReference>
<dbReference type="STRING" id="273057.SSO2163"/>
<dbReference type="PaxDb" id="273057-SSO2163"/>
<dbReference type="EnsemblBacteria" id="AAK42339">
    <property type="protein sequence ID" value="AAK42339"/>
    <property type="gene ID" value="SSO2163"/>
</dbReference>
<dbReference type="KEGG" id="sso:SSO2163"/>
<dbReference type="PATRIC" id="fig|273057.12.peg.2256"/>
<dbReference type="eggNOG" id="arCOG00419">
    <property type="taxonomic scope" value="Archaea"/>
</dbReference>
<dbReference type="HOGENOM" id="CLU_056776_3_2_2"/>
<dbReference type="InParanoid" id="P95937"/>
<dbReference type="PhylomeDB" id="P95937"/>
<dbReference type="Proteomes" id="UP000001974">
    <property type="component" value="Chromosome"/>
</dbReference>
<dbReference type="GO" id="GO:0047627">
    <property type="term" value="F:adenylylsulfatase activity"/>
    <property type="evidence" value="ECO:0000318"/>
    <property type="project" value="GO_Central"/>
</dbReference>
<dbReference type="GO" id="GO:0009150">
    <property type="term" value="P:purine ribonucleotide metabolic process"/>
    <property type="evidence" value="ECO:0000318"/>
    <property type="project" value="GO_Central"/>
</dbReference>
<dbReference type="GO" id="GO:0006790">
    <property type="term" value="P:sulfur compound metabolic process"/>
    <property type="evidence" value="ECO:0000318"/>
    <property type="project" value="GO_Central"/>
</dbReference>
<dbReference type="CDD" id="cd01277">
    <property type="entry name" value="HINT_subgroup"/>
    <property type="match status" value="1"/>
</dbReference>
<dbReference type="Gene3D" id="3.30.428.10">
    <property type="entry name" value="HIT-like"/>
    <property type="match status" value="1"/>
</dbReference>
<dbReference type="InterPro" id="IPR039384">
    <property type="entry name" value="HINT"/>
</dbReference>
<dbReference type="InterPro" id="IPR019808">
    <property type="entry name" value="Histidine_triad_CS"/>
</dbReference>
<dbReference type="InterPro" id="IPR001310">
    <property type="entry name" value="Histidine_triad_HIT"/>
</dbReference>
<dbReference type="InterPro" id="IPR011146">
    <property type="entry name" value="HIT-like"/>
</dbReference>
<dbReference type="InterPro" id="IPR036265">
    <property type="entry name" value="HIT-like_sf"/>
</dbReference>
<dbReference type="PANTHER" id="PTHR47670">
    <property type="entry name" value="ADENYLYLSULFATASE HINT3"/>
    <property type="match status" value="1"/>
</dbReference>
<dbReference type="PANTHER" id="PTHR47670:SF1">
    <property type="entry name" value="ADENYLYLSULFATASE HINT3"/>
    <property type="match status" value="1"/>
</dbReference>
<dbReference type="Pfam" id="PF01230">
    <property type="entry name" value="HIT"/>
    <property type="match status" value="1"/>
</dbReference>
<dbReference type="PRINTS" id="PR00332">
    <property type="entry name" value="HISTRIAD"/>
</dbReference>
<dbReference type="SUPFAM" id="SSF54197">
    <property type="entry name" value="HIT-like"/>
    <property type="match status" value="1"/>
</dbReference>
<dbReference type="PROSITE" id="PS00892">
    <property type="entry name" value="HIT_1"/>
    <property type="match status" value="1"/>
</dbReference>
<dbReference type="PROSITE" id="PS51084">
    <property type="entry name" value="HIT_2"/>
    <property type="match status" value="1"/>
</dbReference>
<organism>
    <name type="scientific">Saccharolobus solfataricus (strain ATCC 35092 / DSM 1617 / JCM 11322 / P2)</name>
    <name type="common">Sulfolobus solfataricus</name>
    <dbReference type="NCBI Taxonomy" id="273057"/>
    <lineage>
        <taxon>Archaea</taxon>
        <taxon>Thermoproteota</taxon>
        <taxon>Thermoprotei</taxon>
        <taxon>Sulfolobales</taxon>
        <taxon>Sulfolobaceae</taxon>
        <taxon>Saccharolobus</taxon>
    </lineage>
</organism>
<proteinExistence type="predicted"/>